<evidence type="ECO:0000255" key="1">
    <source>
        <dbReference type="HAMAP-Rule" id="MF_03109"/>
    </source>
</evidence>
<evidence type="ECO:0000255" key="2">
    <source>
        <dbReference type="PROSITE-ProRule" id="PRU01052"/>
    </source>
</evidence>
<evidence type="ECO:0000269" key="3">
    <source>
    </source>
</evidence>
<evidence type="ECO:0000305" key="4"/>
<evidence type="ECO:0007829" key="5">
    <source>
        <dbReference type="PDB" id="5CA8"/>
    </source>
</evidence>
<evidence type="ECO:0007829" key="6">
    <source>
        <dbReference type="PDB" id="5CA9"/>
    </source>
</evidence>
<evidence type="ECO:0007829" key="7">
    <source>
        <dbReference type="PDB" id="5CB2"/>
    </source>
</evidence>
<proteinExistence type="evidence at protein level"/>
<protein>
    <recommendedName>
        <fullName evidence="1">Protein SEY1</fullName>
        <ecNumber evidence="1">3.6.5.-</ecNumber>
    </recommendedName>
</protein>
<comment type="function">
    <text evidence="1 3">Cooperates with the reticulon proteins and tubule-shaping DP1 family proteins to generate and maintain the structure of the tubular endoplasmic reticulum network. Has GTPase activity, which is required for its function in ER organization (By similarity). Required for virulence and resistance to cycloheximide.</text>
</comment>
<comment type="subcellular location">
    <subcellularLocation>
        <location evidence="1">Endoplasmic reticulum membrane</location>
        <topology evidence="1">Multi-pass membrane protein</topology>
    </subcellularLocation>
    <text evidence="1">Enriched in the cortical ER. Concentrated in punctae along the ER tubules.</text>
</comment>
<comment type="similarity">
    <text evidence="2">Belongs to the TRAFAC class dynamin-like GTPase superfamily. GB1/RHD3 GTPase family. RHD3 subfamily.</text>
</comment>
<keyword id="KW-0002">3D-structure</keyword>
<keyword id="KW-0256">Endoplasmic reticulum</keyword>
<keyword id="KW-0342">GTP-binding</keyword>
<keyword id="KW-0378">Hydrolase</keyword>
<keyword id="KW-0472">Membrane</keyword>
<keyword id="KW-0547">Nucleotide-binding</keyword>
<keyword id="KW-1185">Reference proteome</keyword>
<keyword id="KW-0812">Transmembrane</keyword>
<keyword id="KW-1133">Transmembrane helix</keyword>
<gene>
    <name evidence="1" type="primary">SEY1</name>
    <name type="synonym">NAG6</name>
    <name type="ordered locus">CAALFM_C604570WA</name>
    <name type="ORF">CaO19.2151</name>
    <name type="ORF">CaO19.9698</name>
</gene>
<organism>
    <name type="scientific">Candida albicans (strain SC5314 / ATCC MYA-2876)</name>
    <name type="common">Yeast</name>
    <dbReference type="NCBI Taxonomy" id="237561"/>
    <lineage>
        <taxon>Eukaryota</taxon>
        <taxon>Fungi</taxon>
        <taxon>Dikarya</taxon>
        <taxon>Ascomycota</taxon>
        <taxon>Saccharomycotina</taxon>
        <taxon>Pichiomycetes</taxon>
        <taxon>Debaryomycetaceae</taxon>
        <taxon>Candida/Lodderomyces clade</taxon>
        <taxon>Candida</taxon>
    </lineage>
</organism>
<dbReference type="EC" id="3.6.5.-" evidence="1"/>
<dbReference type="EMBL" id="AB056468">
    <property type="protein sequence ID" value="BAB43823.1"/>
    <property type="molecule type" value="Genomic_DNA"/>
</dbReference>
<dbReference type="EMBL" id="AB052111">
    <property type="protein sequence ID" value="BAB43817.1"/>
    <property type="molecule type" value="Genomic_DNA"/>
</dbReference>
<dbReference type="EMBL" id="CP017628">
    <property type="protein sequence ID" value="AOW30373.1"/>
    <property type="molecule type" value="Genomic_DNA"/>
</dbReference>
<dbReference type="RefSeq" id="XP_712426.1">
    <property type="nucleotide sequence ID" value="XM_707333.2"/>
</dbReference>
<dbReference type="PDB" id="5CA8">
    <property type="method" value="X-ray"/>
    <property type="resolution" value="2.30 A"/>
    <property type="chains" value="A=1-692"/>
</dbReference>
<dbReference type="PDB" id="5CA9">
    <property type="method" value="X-ray"/>
    <property type="resolution" value="2.80 A"/>
    <property type="chains" value="A=1-692"/>
</dbReference>
<dbReference type="PDB" id="5CB2">
    <property type="method" value="X-ray"/>
    <property type="resolution" value="2.90 A"/>
    <property type="chains" value="A=1-692"/>
</dbReference>
<dbReference type="PDBsum" id="5CA8"/>
<dbReference type="PDBsum" id="5CA9"/>
<dbReference type="PDBsum" id="5CB2"/>
<dbReference type="SMR" id="Q9C0L9"/>
<dbReference type="BioGRID" id="1229054">
    <property type="interactions" value="1"/>
</dbReference>
<dbReference type="FunCoup" id="Q9C0L9">
    <property type="interactions" value="66"/>
</dbReference>
<dbReference type="STRING" id="237561.Q9C0L9"/>
<dbReference type="EnsemblFungi" id="C6_04570W_A-T">
    <property type="protein sequence ID" value="C6_04570W_A-T-p1"/>
    <property type="gene ID" value="C6_04570W_A"/>
</dbReference>
<dbReference type="GeneID" id="3645961"/>
<dbReference type="KEGG" id="cal:CAALFM_C604570WA"/>
<dbReference type="CGD" id="CAL0000187915">
    <property type="gene designation" value="NAG6"/>
</dbReference>
<dbReference type="VEuPathDB" id="FungiDB:C6_04570W_A"/>
<dbReference type="eggNOG" id="KOG2203">
    <property type="taxonomic scope" value="Eukaryota"/>
</dbReference>
<dbReference type="HOGENOM" id="CLU_011270_0_0_1"/>
<dbReference type="InParanoid" id="Q9C0L9"/>
<dbReference type="OrthoDB" id="1597724at2759"/>
<dbReference type="BRENDA" id="3.6.5.5">
    <property type="organism ID" value="1096"/>
</dbReference>
<dbReference type="EvolutionaryTrace" id="Q9C0L9"/>
<dbReference type="PHI-base" id="PHI:512"/>
<dbReference type="PRO" id="PR:Q9C0L9"/>
<dbReference type="Proteomes" id="UP000000559">
    <property type="component" value="Chromosome 6"/>
</dbReference>
<dbReference type="GO" id="GO:0032541">
    <property type="term" value="C:cortical endoplasmic reticulum"/>
    <property type="evidence" value="ECO:0007669"/>
    <property type="project" value="EnsemblFungi"/>
</dbReference>
<dbReference type="GO" id="GO:0005783">
    <property type="term" value="C:endoplasmic reticulum"/>
    <property type="evidence" value="ECO:0000318"/>
    <property type="project" value="GO_Central"/>
</dbReference>
<dbReference type="GO" id="GO:0005789">
    <property type="term" value="C:endoplasmic reticulum membrane"/>
    <property type="evidence" value="ECO:0007669"/>
    <property type="project" value="UniProtKB-SubCell"/>
</dbReference>
<dbReference type="GO" id="GO:0005525">
    <property type="term" value="F:GTP binding"/>
    <property type="evidence" value="ECO:0007669"/>
    <property type="project" value="UniProtKB-UniRule"/>
</dbReference>
<dbReference type="GO" id="GO:0003924">
    <property type="term" value="F:GTPase activity"/>
    <property type="evidence" value="ECO:0000318"/>
    <property type="project" value="GO_Central"/>
</dbReference>
<dbReference type="GO" id="GO:0048309">
    <property type="term" value="P:endoplasmic reticulum inheritance"/>
    <property type="evidence" value="ECO:0007669"/>
    <property type="project" value="EnsemblFungi"/>
</dbReference>
<dbReference type="GO" id="GO:0016320">
    <property type="term" value="P:endoplasmic reticulum membrane fusion"/>
    <property type="evidence" value="ECO:0000318"/>
    <property type="project" value="GO_Central"/>
</dbReference>
<dbReference type="GO" id="GO:0008645">
    <property type="term" value="P:hexose transmembrane transport"/>
    <property type="evidence" value="ECO:0000315"/>
    <property type="project" value="CGD"/>
</dbReference>
<dbReference type="CDD" id="cd01851">
    <property type="entry name" value="GBP"/>
    <property type="match status" value="1"/>
</dbReference>
<dbReference type="FunFam" id="3.40.50.300:FF:000727">
    <property type="entry name" value="Protein SEY1 homolog"/>
    <property type="match status" value="1"/>
</dbReference>
<dbReference type="Gene3D" id="3.40.50.300">
    <property type="entry name" value="P-loop containing nucleotide triphosphate hydrolases"/>
    <property type="match status" value="1"/>
</dbReference>
<dbReference type="HAMAP" id="MF_03109">
    <property type="entry name" value="Sey1"/>
    <property type="match status" value="1"/>
</dbReference>
<dbReference type="InterPro" id="IPR030386">
    <property type="entry name" value="G_GB1_RHD3_dom"/>
</dbReference>
<dbReference type="InterPro" id="IPR027417">
    <property type="entry name" value="P-loop_NTPase"/>
</dbReference>
<dbReference type="InterPro" id="IPR008803">
    <property type="entry name" value="RHD3/Sey1"/>
</dbReference>
<dbReference type="InterPro" id="IPR046758">
    <property type="entry name" value="Sey1/RHD3-like_3HB"/>
</dbReference>
<dbReference type="PANTHER" id="PTHR45923">
    <property type="entry name" value="PROTEIN SEY1"/>
    <property type="match status" value="1"/>
</dbReference>
<dbReference type="PANTHER" id="PTHR45923:SF2">
    <property type="entry name" value="PROTEIN SEY1"/>
    <property type="match status" value="1"/>
</dbReference>
<dbReference type="Pfam" id="PF05879">
    <property type="entry name" value="RHD3_GTPase"/>
    <property type="match status" value="1"/>
</dbReference>
<dbReference type="Pfam" id="PF20428">
    <property type="entry name" value="Sey1_3HB"/>
    <property type="match status" value="1"/>
</dbReference>
<dbReference type="SUPFAM" id="SSF52540">
    <property type="entry name" value="P-loop containing nucleoside triphosphate hydrolases"/>
    <property type="match status" value="1"/>
</dbReference>
<dbReference type="PROSITE" id="PS51715">
    <property type="entry name" value="G_GB1_RHD3"/>
    <property type="match status" value="1"/>
</dbReference>
<name>SEY1_CANAL</name>
<sequence length="790" mass="90239">MELSEGELSHTSSSSSFVPVDQRQLQDAIQIIDENKHFNTGILDYINKTSPADVGNNYHIISVFGSQSTGKSTLLNRLFNTNFDVMDESNRQQTTKGIWLAYSPVVSTTLGHTTSKSNILVMDVEGTDGRERGEDQDFERKAALFALSTSEVLIINIWETQVGLYQGANMGLLKTVFEVNLSLFGKSKLETHNDHKVLLLIVIRDHVGVTPVESLAKTFTSDLQNMWSSLAKPAELEHLQFADFFDVTFHALNHKVLQPKEFGEGINRLDDRLVVSNELFKPEYHHDVPIDGWTMYAERCWEQIETNKDLDLPTQQILVAQFKCDEIVESVFQEFLAKYQHHFKEVDAAPDFEELGALFADLRQDAFEDYDASASRYNKAVYEQKRKKLRWLINDKLKEVFDVHAKNLCNTLLEKFEKDLVALKGKDFAVNVKTLSTKLVEDVNFQVSLMSLQGDLSLDEIILALTKDIDAIVAKQQVIELNSIVNKSVKKLSASLSKSIQFELGDPNEETWDNVLQQFKGVYEKFGGDFGLGTSSTQNQQAIEKFKFKSWCQFYDVTHKLISREKLLALLQDRFDDKFRYDENGLPKLYLNEQDLEKTFAVAKQHALQVLPILTFAKLADGSEIVPDYDIFDSKLREQFLGGYDDSDDEEDHCFAEIITEQEKSEVLAKFKKEVDAKYIETKRSIVQHITQIPYYIYLIILVLGWNEFMAIIRNPLFFSLSIVLGATVYVLYYLGLLRPALVVAQRTMDEVIVMAKTKLREVLIDDHEVTGRQLNKMAGSKENIELDDM</sequence>
<reference key="1">
    <citation type="journal article" date="2001" name="Eur. J. Biochem.">
        <title>Identification and characterization of the genes for N-acetylglucosamine kinase and N-acetylglucosamine-phosphate deacetylase in the pathogenic fungus Candida albicans.</title>
        <authorList>
            <person name="Yamada-Okabe T."/>
            <person name="Sakamori Y."/>
            <person name="Mio T."/>
            <person name="Yamada-Okabe H."/>
        </authorList>
    </citation>
    <scope>NUCLEOTIDE SEQUENCE [GENOMIC DNA]</scope>
    <source>
        <strain>SC5314 / CAF2-1</strain>
    </source>
</reference>
<reference key="2">
    <citation type="journal article" date="2004" name="Proc. Natl. Acad. Sci. U.S.A.">
        <title>The diploid genome sequence of Candida albicans.</title>
        <authorList>
            <person name="Jones T."/>
            <person name="Federspiel N.A."/>
            <person name="Chibana H."/>
            <person name="Dungan J."/>
            <person name="Kalman S."/>
            <person name="Magee B.B."/>
            <person name="Newport G."/>
            <person name="Thorstenson Y.R."/>
            <person name="Agabian N."/>
            <person name="Magee P.T."/>
            <person name="Davis R.W."/>
            <person name="Scherer S."/>
        </authorList>
    </citation>
    <scope>NUCLEOTIDE SEQUENCE [LARGE SCALE GENOMIC DNA]</scope>
    <source>
        <strain>SC5314 / ATCC MYA-2876</strain>
    </source>
</reference>
<reference key="3">
    <citation type="journal article" date="2007" name="Genome Biol.">
        <title>Assembly of the Candida albicans genome into sixteen supercontigs aligned on the eight chromosomes.</title>
        <authorList>
            <person name="van het Hoog M."/>
            <person name="Rast T.J."/>
            <person name="Martchenko M."/>
            <person name="Grindle S."/>
            <person name="Dignard D."/>
            <person name="Hogues H."/>
            <person name="Cuomo C."/>
            <person name="Berriman M."/>
            <person name="Scherer S."/>
            <person name="Magee B.B."/>
            <person name="Whiteway M."/>
            <person name="Chibana H."/>
            <person name="Nantel A."/>
            <person name="Magee P.T."/>
        </authorList>
    </citation>
    <scope>GENOME REANNOTATION</scope>
    <source>
        <strain>SC5314 / ATCC MYA-2876</strain>
    </source>
</reference>
<reference key="4">
    <citation type="journal article" date="2013" name="Genome Biol.">
        <title>Assembly of a phased diploid Candida albicans genome facilitates allele-specific measurements and provides a simple model for repeat and indel structure.</title>
        <authorList>
            <person name="Muzzey D."/>
            <person name="Schwartz K."/>
            <person name="Weissman J.S."/>
            <person name="Sherlock G."/>
        </authorList>
    </citation>
    <scope>NUCLEOTIDE SEQUENCE [LARGE SCALE GENOMIC DNA]</scope>
    <scope>GENOME REANNOTATION</scope>
    <source>
        <strain>SC5314 / ATCC MYA-2876</strain>
    </source>
</reference>
<reference key="5">
    <citation type="journal article" date="2002" name="FEMS Microbiol. Lett.">
        <title>Characterization of the CaNAG3, CaNAG4, and CaNAG6 genes of the pathogenic fungus Candida albicans: possible involvement of these genes in the susceptibilities of cytotoxic agents.</title>
        <authorList>
            <person name="Yamada-Okabe T."/>
            <person name="Yamada-Okabe H."/>
        </authorList>
    </citation>
    <scope>FUNCTION</scope>
</reference>
<accession>Q9C0L9</accession>
<accession>A0A1D8PQG6</accession>
<accession>Q59RG8</accession>
<feature type="chain" id="PRO_0000155129" description="Protein SEY1">
    <location>
        <begin position="1"/>
        <end position="790"/>
    </location>
</feature>
<feature type="topological domain" description="Cytoplasmic" evidence="1">
    <location>
        <begin position="1"/>
        <end position="692"/>
    </location>
</feature>
<feature type="transmembrane region" description="Helical" evidence="1">
    <location>
        <begin position="693"/>
        <end position="713"/>
    </location>
</feature>
<feature type="topological domain" description="Lumenal" evidence="1">
    <location>
        <begin position="714"/>
        <end position="716"/>
    </location>
</feature>
<feature type="transmembrane region" description="Helical" evidence="1">
    <location>
        <begin position="717"/>
        <end position="737"/>
    </location>
</feature>
<feature type="topological domain" description="Cytoplasmic" evidence="1">
    <location>
        <begin position="738"/>
        <end position="790"/>
    </location>
</feature>
<feature type="domain" description="GB1/RHD3-type G" evidence="2">
    <location>
        <begin position="55"/>
        <end position="284"/>
    </location>
</feature>
<feature type="binding site" evidence="1">
    <location>
        <begin position="65"/>
        <end position="72"/>
    </location>
    <ligand>
        <name>GTP</name>
        <dbReference type="ChEBI" id="CHEBI:37565"/>
    </ligand>
</feature>
<feature type="sequence conflict" description="In Ref. 1; BAB43823/BAB43817." evidence="4" ref="1">
    <original>D</original>
    <variation>G</variation>
    <location>
        <position position="270"/>
    </location>
</feature>
<feature type="sequence conflict" description="In Ref. 1; BAB43823/BAB43817." evidence="4" ref="1">
    <original>A</original>
    <variation>T</variation>
    <location>
        <position position="337"/>
    </location>
</feature>
<feature type="sequence conflict" description="In Ref. 1; BAB43823/BAB43817." evidence="4" ref="1">
    <original>I</original>
    <variation>V</variation>
    <location>
        <position position="479"/>
    </location>
</feature>
<feature type="strand" evidence="5">
    <location>
        <begin position="29"/>
        <end position="32"/>
    </location>
</feature>
<feature type="helix" evidence="5">
    <location>
        <begin position="42"/>
        <end position="49"/>
    </location>
</feature>
<feature type="strand" evidence="6">
    <location>
        <begin position="50"/>
        <end position="52"/>
    </location>
</feature>
<feature type="strand" evidence="5">
    <location>
        <begin position="58"/>
        <end position="66"/>
    </location>
</feature>
<feature type="helix" evidence="5">
    <location>
        <begin position="71"/>
        <end position="79"/>
    </location>
</feature>
<feature type="strand" evidence="5">
    <location>
        <begin position="98"/>
        <end position="102"/>
    </location>
</feature>
<feature type="strand" evidence="5">
    <location>
        <begin position="106"/>
        <end position="108"/>
    </location>
</feature>
<feature type="strand" evidence="5">
    <location>
        <begin position="111"/>
        <end position="113"/>
    </location>
</feature>
<feature type="strand" evidence="5">
    <location>
        <begin position="116"/>
        <end position="125"/>
    </location>
</feature>
<feature type="strand" evidence="6">
    <location>
        <begin position="130"/>
        <end position="132"/>
    </location>
</feature>
<feature type="helix" evidence="5">
    <location>
        <begin position="136"/>
        <end position="149"/>
    </location>
</feature>
<feature type="strand" evidence="5">
    <location>
        <begin position="151"/>
        <end position="159"/>
    </location>
</feature>
<feature type="helix" evidence="5">
    <location>
        <begin position="165"/>
        <end position="167"/>
    </location>
</feature>
<feature type="helix" evidence="5">
    <location>
        <begin position="170"/>
        <end position="191"/>
    </location>
</feature>
<feature type="strand" evidence="5">
    <location>
        <begin position="197"/>
        <end position="206"/>
    </location>
</feature>
<feature type="strand" evidence="5">
    <location>
        <begin position="208"/>
        <end position="210"/>
    </location>
</feature>
<feature type="helix" evidence="5">
    <location>
        <begin position="212"/>
        <end position="229"/>
    </location>
</feature>
<feature type="helix" evidence="5">
    <location>
        <begin position="234"/>
        <end position="236"/>
    </location>
</feature>
<feature type="helix" evidence="5">
    <location>
        <begin position="241"/>
        <end position="244"/>
    </location>
</feature>
<feature type="strand" evidence="5">
    <location>
        <begin position="245"/>
        <end position="253"/>
    </location>
</feature>
<feature type="turn" evidence="5">
    <location>
        <begin position="255"/>
        <end position="257"/>
    </location>
</feature>
<feature type="helix" evidence="5">
    <location>
        <begin position="259"/>
        <end position="273"/>
    </location>
</feature>
<feature type="helix" evidence="5">
    <location>
        <begin position="282"/>
        <end position="284"/>
    </location>
</feature>
<feature type="helix" evidence="5">
    <location>
        <begin position="290"/>
        <end position="292"/>
    </location>
</feature>
<feature type="helix" evidence="5">
    <location>
        <begin position="293"/>
        <end position="305"/>
    </location>
</feature>
<feature type="turn" evidence="6">
    <location>
        <begin position="308"/>
        <end position="310"/>
    </location>
</feature>
<feature type="helix" evidence="5">
    <location>
        <begin position="312"/>
        <end position="343"/>
    </location>
</feature>
<feature type="turn" evidence="5">
    <location>
        <begin position="352"/>
        <end position="354"/>
    </location>
</feature>
<feature type="helix" evidence="5">
    <location>
        <begin position="358"/>
        <end position="374"/>
    </location>
</feature>
<feature type="strand" evidence="7">
    <location>
        <begin position="375"/>
        <end position="377"/>
    </location>
</feature>
<feature type="helix" evidence="5">
    <location>
        <begin position="379"/>
        <end position="396"/>
    </location>
</feature>
<feature type="helix" evidence="5">
    <location>
        <begin position="398"/>
        <end position="422"/>
    </location>
</feature>
<feature type="turn" evidence="5">
    <location>
        <begin position="423"/>
        <end position="427"/>
    </location>
</feature>
<feature type="helix" evidence="5">
    <location>
        <begin position="428"/>
        <end position="431"/>
    </location>
</feature>
<feature type="helix" evidence="5">
    <location>
        <begin position="433"/>
        <end position="448"/>
    </location>
</feature>
<feature type="turn" evidence="6">
    <location>
        <begin position="452"/>
        <end position="455"/>
    </location>
</feature>
<feature type="helix" evidence="5">
    <location>
        <begin position="459"/>
        <end position="470"/>
    </location>
</feature>
<feature type="helix" evidence="5">
    <location>
        <begin position="473"/>
        <end position="504"/>
    </location>
</feature>
<feature type="helix" evidence="5">
    <location>
        <begin position="511"/>
        <end position="523"/>
    </location>
</feature>
<feature type="turn" evidence="7">
    <location>
        <begin position="525"/>
        <end position="528"/>
    </location>
</feature>
<feature type="turn" evidence="5">
    <location>
        <begin position="536"/>
        <end position="545"/>
    </location>
</feature>
<feature type="helix" evidence="5">
    <location>
        <begin position="546"/>
        <end position="561"/>
    </location>
</feature>
<feature type="helix" evidence="5">
    <location>
        <begin position="564"/>
        <end position="579"/>
    </location>
</feature>
<feature type="strand" evidence="6">
    <location>
        <begin position="583"/>
        <end position="585"/>
    </location>
</feature>
<feature type="helix" evidence="5">
    <location>
        <begin position="593"/>
        <end position="608"/>
    </location>
</feature>
<feature type="helix" evidence="5">
    <location>
        <begin position="611"/>
        <end position="614"/>
    </location>
</feature>
<feature type="turn" evidence="6">
    <location>
        <begin position="615"/>
        <end position="617"/>
    </location>
</feature>
<feature type="strand" evidence="7">
    <location>
        <begin position="620"/>
        <end position="622"/>
    </location>
</feature>
<feature type="helix" evidence="5">
    <location>
        <begin position="635"/>
        <end position="638"/>
    </location>
</feature>
<feature type="turn" evidence="6">
    <location>
        <begin position="650"/>
        <end position="652"/>
    </location>
</feature>
<feature type="strand" evidence="5">
    <location>
        <begin position="655"/>
        <end position="659"/>
    </location>
</feature>
<feature type="helix" evidence="5">
    <location>
        <begin position="661"/>
        <end position="684"/>
    </location>
</feature>